<keyword id="KW-0997">Cell inner membrane</keyword>
<keyword id="KW-1003">Cell membrane</keyword>
<keyword id="KW-0472">Membrane</keyword>
<keyword id="KW-0653">Protein transport</keyword>
<keyword id="KW-0811">Translocation</keyword>
<keyword id="KW-0812">Transmembrane</keyword>
<keyword id="KW-1133">Transmembrane helix</keyword>
<keyword id="KW-0813">Transport</keyword>
<accession>B3R789</accession>
<organism>
    <name type="scientific">Cupriavidus taiwanensis (strain DSM 17343 / BCRC 17206 / CCUG 44338 / CIP 107171 / LMG 19424 / R1)</name>
    <name type="common">Ralstonia taiwanensis (strain LMG 19424)</name>
    <dbReference type="NCBI Taxonomy" id="977880"/>
    <lineage>
        <taxon>Bacteria</taxon>
        <taxon>Pseudomonadati</taxon>
        <taxon>Pseudomonadota</taxon>
        <taxon>Betaproteobacteria</taxon>
        <taxon>Burkholderiales</taxon>
        <taxon>Burkholderiaceae</taxon>
        <taxon>Cupriavidus</taxon>
    </lineage>
</organism>
<reference key="1">
    <citation type="journal article" date="2008" name="Genome Res.">
        <title>Genome sequence of the beta-rhizobium Cupriavidus taiwanensis and comparative genomics of rhizobia.</title>
        <authorList>
            <person name="Amadou C."/>
            <person name="Pascal G."/>
            <person name="Mangenot S."/>
            <person name="Glew M."/>
            <person name="Bontemps C."/>
            <person name="Capela D."/>
            <person name="Carrere S."/>
            <person name="Cruveiller S."/>
            <person name="Dossat C."/>
            <person name="Lajus A."/>
            <person name="Marchetti M."/>
            <person name="Poinsot V."/>
            <person name="Rouy Z."/>
            <person name="Servin B."/>
            <person name="Saad M."/>
            <person name="Schenowitz C."/>
            <person name="Barbe V."/>
            <person name="Batut J."/>
            <person name="Medigue C."/>
            <person name="Masson-Boivin C."/>
        </authorList>
    </citation>
    <scope>NUCLEOTIDE SEQUENCE [LARGE SCALE GENOMIC DNA]</scope>
    <source>
        <strain>DSM 17343 / BCRC 17206 / CCUG 44338 / CIP 107171 / LMG 19424 / R1</strain>
    </source>
</reference>
<gene>
    <name evidence="1" type="primary">tatA</name>
    <name type="ordered locus">RALTA_A2864</name>
</gene>
<dbReference type="EMBL" id="CU633749">
    <property type="protein sequence ID" value="CAQ70789.1"/>
    <property type="molecule type" value="Genomic_DNA"/>
</dbReference>
<dbReference type="RefSeq" id="WP_012354081.1">
    <property type="nucleotide sequence ID" value="NC_010528.1"/>
</dbReference>
<dbReference type="SMR" id="B3R789"/>
<dbReference type="GeneID" id="29760982"/>
<dbReference type="KEGG" id="cti:RALTA_A2864"/>
<dbReference type="eggNOG" id="COG1826">
    <property type="taxonomic scope" value="Bacteria"/>
</dbReference>
<dbReference type="HOGENOM" id="CLU_086034_5_3_4"/>
<dbReference type="BioCyc" id="CTAI977880:RALTA_RS13955-MONOMER"/>
<dbReference type="Proteomes" id="UP000001692">
    <property type="component" value="Chromosome 1"/>
</dbReference>
<dbReference type="GO" id="GO:0033281">
    <property type="term" value="C:TAT protein transport complex"/>
    <property type="evidence" value="ECO:0007669"/>
    <property type="project" value="UniProtKB-UniRule"/>
</dbReference>
<dbReference type="GO" id="GO:0008320">
    <property type="term" value="F:protein transmembrane transporter activity"/>
    <property type="evidence" value="ECO:0007669"/>
    <property type="project" value="UniProtKB-UniRule"/>
</dbReference>
<dbReference type="GO" id="GO:0043953">
    <property type="term" value="P:protein transport by the Tat complex"/>
    <property type="evidence" value="ECO:0007669"/>
    <property type="project" value="UniProtKB-UniRule"/>
</dbReference>
<dbReference type="Gene3D" id="1.20.5.3310">
    <property type="match status" value="1"/>
</dbReference>
<dbReference type="HAMAP" id="MF_00236">
    <property type="entry name" value="TatA_E"/>
    <property type="match status" value="1"/>
</dbReference>
<dbReference type="InterPro" id="IPR003369">
    <property type="entry name" value="TatA/B/E"/>
</dbReference>
<dbReference type="InterPro" id="IPR006312">
    <property type="entry name" value="TatA/E"/>
</dbReference>
<dbReference type="NCBIfam" id="NF002813">
    <property type="entry name" value="PRK02958.1"/>
    <property type="match status" value="1"/>
</dbReference>
<dbReference type="NCBIfam" id="TIGR01411">
    <property type="entry name" value="tatAE"/>
    <property type="match status" value="1"/>
</dbReference>
<dbReference type="PANTHER" id="PTHR42982">
    <property type="entry name" value="SEC-INDEPENDENT PROTEIN TRANSLOCASE PROTEIN TATA"/>
    <property type="match status" value="1"/>
</dbReference>
<dbReference type="PANTHER" id="PTHR42982:SF1">
    <property type="entry name" value="SEC-INDEPENDENT PROTEIN TRANSLOCASE PROTEIN TATA"/>
    <property type="match status" value="1"/>
</dbReference>
<dbReference type="Pfam" id="PF02416">
    <property type="entry name" value="TatA_B_E"/>
    <property type="match status" value="1"/>
</dbReference>
<protein>
    <recommendedName>
        <fullName evidence="1">Sec-independent protein translocase protein TatA</fullName>
    </recommendedName>
</protein>
<name>TATA_CUPTR</name>
<sequence>MGSFSIWHWLIVLVIVMLVFGTKKLRNIGQDLGGAVKGFKDGMKDGEDKGAQPAASKELRDSTTIDVDAKEKSRQQ</sequence>
<feature type="chain" id="PRO_1000197866" description="Sec-independent protein translocase protein TatA">
    <location>
        <begin position="1"/>
        <end position="76"/>
    </location>
</feature>
<feature type="transmembrane region" description="Helical" evidence="1">
    <location>
        <begin position="1"/>
        <end position="21"/>
    </location>
</feature>
<feature type="region of interest" description="Disordered" evidence="2">
    <location>
        <begin position="41"/>
        <end position="76"/>
    </location>
</feature>
<feature type="compositionally biased region" description="Basic and acidic residues" evidence="2">
    <location>
        <begin position="41"/>
        <end position="50"/>
    </location>
</feature>
<feature type="compositionally biased region" description="Basic and acidic residues" evidence="2">
    <location>
        <begin position="57"/>
        <end position="76"/>
    </location>
</feature>
<comment type="function">
    <text evidence="1">Part of the twin-arginine translocation (Tat) system that transports large folded proteins containing a characteristic twin-arginine motif in their signal peptide across membranes. TatA could form the protein-conducting channel of the Tat system.</text>
</comment>
<comment type="subunit">
    <text evidence="1">The Tat system comprises two distinct complexes: a TatABC complex, containing multiple copies of TatA, TatB and TatC subunits, and a separate TatA complex, containing only TatA subunits. Substrates initially bind to the TatABC complex, which probably triggers association of the separate TatA complex to form the active translocon.</text>
</comment>
<comment type="subcellular location">
    <subcellularLocation>
        <location evidence="1">Cell inner membrane</location>
        <topology evidence="1">Single-pass membrane protein</topology>
    </subcellularLocation>
</comment>
<comment type="similarity">
    <text evidence="1">Belongs to the TatA/E family.</text>
</comment>
<proteinExistence type="inferred from homology"/>
<evidence type="ECO:0000255" key="1">
    <source>
        <dbReference type="HAMAP-Rule" id="MF_00236"/>
    </source>
</evidence>
<evidence type="ECO:0000256" key="2">
    <source>
        <dbReference type="SAM" id="MobiDB-lite"/>
    </source>
</evidence>